<keyword id="KW-0145">Chemotaxis</keyword>
<keyword id="KW-0238">DNA-binding</keyword>
<keyword id="KW-0395">Inflammatory response</keyword>
<keyword id="KW-1017">Isopeptide bond</keyword>
<keyword id="KW-0479">Metal-binding</keyword>
<keyword id="KW-0539">Nucleus</keyword>
<keyword id="KW-1185">Reference proteome</keyword>
<keyword id="KW-0677">Repeat</keyword>
<keyword id="KW-0804">Transcription</keyword>
<keyword id="KW-0805">Transcription regulation</keyword>
<keyword id="KW-0832">Ubl conjugation</keyword>
<keyword id="KW-0862">Zinc</keyword>
<keyword id="KW-0863">Zinc-finger</keyword>
<feature type="chain" id="PRO_0000047672" description="Zinc finger protein 580">
    <location>
        <begin position="1"/>
        <end position="172"/>
    </location>
</feature>
<feature type="zinc finger region" description="C2H2-type 1" evidence="3">
    <location>
        <begin position="92"/>
        <end position="114"/>
    </location>
</feature>
<feature type="zinc finger region" description="C2H2-type 2" evidence="3">
    <location>
        <begin position="120"/>
        <end position="142"/>
    </location>
</feature>
<feature type="zinc finger region" description="C2H2-type 3" evidence="3">
    <location>
        <begin position="150"/>
        <end position="172"/>
    </location>
</feature>
<feature type="region of interest" description="Disordered" evidence="4">
    <location>
        <begin position="1"/>
        <end position="92"/>
    </location>
</feature>
<feature type="compositionally biased region" description="Pro residues" evidence="4">
    <location>
        <begin position="19"/>
        <end position="30"/>
    </location>
</feature>
<feature type="cross-link" description="Glycyl lysine isopeptide (Lys-Gly) (interchain with G-Cter in SUMO2)" evidence="2">
    <location>
        <position position="31"/>
    </location>
</feature>
<feature type="cross-link" description="Glycyl lysine isopeptide (Lys-Gly) (interchain with G-Cter in SUMO2)" evidence="2">
    <location>
        <position position="118"/>
    </location>
</feature>
<evidence type="ECO:0000250" key="1"/>
<evidence type="ECO:0000250" key="2">
    <source>
        <dbReference type="UniProtKB" id="Q9UK33"/>
    </source>
</evidence>
<evidence type="ECO:0000255" key="3">
    <source>
        <dbReference type="PROSITE-ProRule" id="PRU00042"/>
    </source>
</evidence>
<evidence type="ECO:0000256" key="4">
    <source>
        <dbReference type="SAM" id="MobiDB-lite"/>
    </source>
</evidence>
<organism>
    <name type="scientific">Mus musculus</name>
    <name type="common">Mouse</name>
    <dbReference type="NCBI Taxonomy" id="10090"/>
    <lineage>
        <taxon>Eukaryota</taxon>
        <taxon>Metazoa</taxon>
        <taxon>Chordata</taxon>
        <taxon>Craniata</taxon>
        <taxon>Vertebrata</taxon>
        <taxon>Euteleostomi</taxon>
        <taxon>Mammalia</taxon>
        <taxon>Eutheria</taxon>
        <taxon>Euarchontoglires</taxon>
        <taxon>Glires</taxon>
        <taxon>Rodentia</taxon>
        <taxon>Myomorpha</taxon>
        <taxon>Muroidea</taxon>
        <taxon>Muridae</taxon>
        <taxon>Murinae</taxon>
        <taxon>Mus</taxon>
        <taxon>Mus</taxon>
    </lineage>
</organism>
<gene>
    <name type="primary">Znf580</name>
    <name type="synonym">Zfp580</name>
</gene>
<sequence length="172" mass="18837">MLLLPPRPPHPRSSSPEVMDPPPPKTPPFPKAEGPSSTSSSVAGPRPPRLGRHLLIDANGVPYTYTVQLEEEPRGPPQREATPGEPGPRKGYSCPECARVFASPLRLQSHRVSHSDLKPFTCGACGKAFKRSSHLSRHRATHRARAGPPHTCPLCPRRFQDAAELAQHVRLH</sequence>
<accession>Q9DB38</accession>
<reference key="1">
    <citation type="journal article" date="2005" name="Science">
        <title>The transcriptional landscape of the mammalian genome.</title>
        <authorList>
            <person name="Carninci P."/>
            <person name="Kasukawa T."/>
            <person name="Katayama S."/>
            <person name="Gough J."/>
            <person name="Frith M.C."/>
            <person name="Maeda N."/>
            <person name="Oyama R."/>
            <person name="Ravasi T."/>
            <person name="Lenhard B."/>
            <person name="Wells C."/>
            <person name="Kodzius R."/>
            <person name="Shimokawa K."/>
            <person name="Bajic V.B."/>
            <person name="Brenner S.E."/>
            <person name="Batalov S."/>
            <person name="Forrest A.R."/>
            <person name="Zavolan M."/>
            <person name="Davis M.J."/>
            <person name="Wilming L.G."/>
            <person name="Aidinis V."/>
            <person name="Allen J.E."/>
            <person name="Ambesi-Impiombato A."/>
            <person name="Apweiler R."/>
            <person name="Aturaliya R.N."/>
            <person name="Bailey T.L."/>
            <person name="Bansal M."/>
            <person name="Baxter L."/>
            <person name="Beisel K.W."/>
            <person name="Bersano T."/>
            <person name="Bono H."/>
            <person name="Chalk A.M."/>
            <person name="Chiu K.P."/>
            <person name="Choudhary V."/>
            <person name="Christoffels A."/>
            <person name="Clutterbuck D.R."/>
            <person name="Crowe M.L."/>
            <person name="Dalla E."/>
            <person name="Dalrymple B.P."/>
            <person name="de Bono B."/>
            <person name="Della Gatta G."/>
            <person name="di Bernardo D."/>
            <person name="Down T."/>
            <person name="Engstrom P."/>
            <person name="Fagiolini M."/>
            <person name="Faulkner G."/>
            <person name="Fletcher C.F."/>
            <person name="Fukushima T."/>
            <person name="Furuno M."/>
            <person name="Futaki S."/>
            <person name="Gariboldi M."/>
            <person name="Georgii-Hemming P."/>
            <person name="Gingeras T.R."/>
            <person name="Gojobori T."/>
            <person name="Green R.E."/>
            <person name="Gustincich S."/>
            <person name="Harbers M."/>
            <person name="Hayashi Y."/>
            <person name="Hensch T.K."/>
            <person name="Hirokawa N."/>
            <person name="Hill D."/>
            <person name="Huminiecki L."/>
            <person name="Iacono M."/>
            <person name="Ikeo K."/>
            <person name="Iwama A."/>
            <person name="Ishikawa T."/>
            <person name="Jakt M."/>
            <person name="Kanapin A."/>
            <person name="Katoh M."/>
            <person name="Kawasawa Y."/>
            <person name="Kelso J."/>
            <person name="Kitamura H."/>
            <person name="Kitano H."/>
            <person name="Kollias G."/>
            <person name="Krishnan S.P."/>
            <person name="Kruger A."/>
            <person name="Kummerfeld S.K."/>
            <person name="Kurochkin I.V."/>
            <person name="Lareau L.F."/>
            <person name="Lazarevic D."/>
            <person name="Lipovich L."/>
            <person name="Liu J."/>
            <person name="Liuni S."/>
            <person name="McWilliam S."/>
            <person name="Madan Babu M."/>
            <person name="Madera M."/>
            <person name="Marchionni L."/>
            <person name="Matsuda H."/>
            <person name="Matsuzawa S."/>
            <person name="Miki H."/>
            <person name="Mignone F."/>
            <person name="Miyake S."/>
            <person name="Morris K."/>
            <person name="Mottagui-Tabar S."/>
            <person name="Mulder N."/>
            <person name="Nakano N."/>
            <person name="Nakauchi H."/>
            <person name="Ng P."/>
            <person name="Nilsson R."/>
            <person name="Nishiguchi S."/>
            <person name="Nishikawa S."/>
            <person name="Nori F."/>
            <person name="Ohara O."/>
            <person name="Okazaki Y."/>
            <person name="Orlando V."/>
            <person name="Pang K.C."/>
            <person name="Pavan W.J."/>
            <person name="Pavesi G."/>
            <person name="Pesole G."/>
            <person name="Petrovsky N."/>
            <person name="Piazza S."/>
            <person name="Reed J."/>
            <person name="Reid J.F."/>
            <person name="Ring B.Z."/>
            <person name="Ringwald M."/>
            <person name="Rost B."/>
            <person name="Ruan Y."/>
            <person name="Salzberg S.L."/>
            <person name="Sandelin A."/>
            <person name="Schneider C."/>
            <person name="Schoenbach C."/>
            <person name="Sekiguchi K."/>
            <person name="Semple C.A."/>
            <person name="Seno S."/>
            <person name="Sessa L."/>
            <person name="Sheng Y."/>
            <person name="Shibata Y."/>
            <person name="Shimada H."/>
            <person name="Shimada K."/>
            <person name="Silva D."/>
            <person name="Sinclair B."/>
            <person name="Sperling S."/>
            <person name="Stupka E."/>
            <person name="Sugiura K."/>
            <person name="Sultana R."/>
            <person name="Takenaka Y."/>
            <person name="Taki K."/>
            <person name="Tammoja K."/>
            <person name="Tan S.L."/>
            <person name="Tang S."/>
            <person name="Taylor M.S."/>
            <person name="Tegner J."/>
            <person name="Teichmann S.A."/>
            <person name="Ueda H.R."/>
            <person name="van Nimwegen E."/>
            <person name="Verardo R."/>
            <person name="Wei C.L."/>
            <person name="Yagi K."/>
            <person name="Yamanishi H."/>
            <person name="Zabarovsky E."/>
            <person name="Zhu S."/>
            <person name="Zimmer A."/>
            <person name="Hide W."/>
            <person name="Bult C."/>
            <person name="Grimmond S.M."/>
            <person name="Teasdale R.D."/>
            <person name="Liu E.T."/>
            <person name="Brusic V."/>
            <person name="Quackenbush J."/>
            <person name="Wahlestedt C."/>
            <person name="Mattick J.S."/>
            <person name="Hume D.A."/>
            <person name="Kai C."/>
            <person name="Sasaki D."/>
            <person name="Tomaru Y."/>
            <person name="Fukuda S."/>
            <person name="Kanamori-Katayama M."/>
            <person name="Suzuki M."/>
            <person name="Aoki J."/>
            <person name="Arakawa T."/>
            <person name="Iida J."/>
            <person name="Imamura K."/>
            <person name="Itoh M."/>
            <person name="Kato T."/>
            <person name="Kawaji H."/>
            <person name="Kawagashira N."/>
            <person name="Kawashima T."/>
            <person name="Kojima M."/>
            <person name="Kondo S."/>
            <person name="Konno H."/>
            <person name="Nakano K."/>
            <person name="Ninomiya N."/>
            <person name="Nishio T."/>
            <person name="Okada M."/>
            <person name="Plessy C."/>
            <person name="Shibata K."/>
            <person name="Shiraki T."/>
            <person name="Suzuki S."/>
            <person name="Tagami M."/>
            <person name="Waki K."/>
            <person name="Watahiki A."/>
            <person name="Okamura-Oho Y."/>
            <person name="Suzuki H."/>
            <person name="Kawai J."/>
            <person name="Hayashizaki Y."/>
        </authorList>
    </citation>
    <scope>NUCLEOTIDE SEQUENCE [LARGE SCALE MRNA]</scope>
    <source>
        <strain>C57BL/6J</strain>
        <tissue>Cerebellum</tissue>
    </source>
</reference>
<reference key="2">
    <citation type="journal article" date="2004" name="Genome Res.">
        <title>The status, quality, and expansion of the NIH full-length cDNA project: the Mammalian Gene Collection (MGC).</title>
        <authorList>
            <consortium name="The MGC Project Team"/>
        </authorList>
    </citation>
    <scope>NUCLEOTIDE SEQUENCE [LARGE SCALE MRNA]</scope>
    <source>
        <strain>C57BL/6J</strain>
        <tissue>Brain</tissue>
    </source>
</reference>
<dbReference type="EMBL" id="AK005257">
    <property type="protein sequence ID" value="BAB23910.1"/>
    <property type="molecule type" value="mRNA"/>
</dbReference>
<dbReference type="EMBL" id="BC066001">
    <property type="protein sequence ID" value="AAH66001.1"/>
    <property type="molecule type" value="mRNA"/>
</dbReference>
<dbReference type="CCDS" id="CCDS51982.1"/>
<dbReference type="RefSeq" id="NP_081176.1">
    <property type="nucleotide sequence ID" value="NM_026900.1"/>
</dbReference>
<dbReference type="SMR" id="Q9DB38"/>
<dbReference type="FunCoup" id="Q9DB38">
    <property type="interactions" value="1045"/>
</dbReference>
<dbReference type="STRING" id="10090.ENSMUSP00000065861"/>
<dbReference type="iPTMnet" id="Q9DB38"/>
<dbReference type="PhosphoSitePlus" id="Q9DB38"/>
<dbReference type="PaxDb" id="10090-ENSMUSP00000065861"/>
<dbReference type="ProteomicsDB" id="299589"/>
<dbReference type="Antibodypedia" id="19580">
    <property type="antibodies" value="82 antibodies from 14 providers"/>
</dbReference>
<dbReference type="Ensembl" id="ENSMUST00000069324.7">
    <property type="protein sequence ID" value="ENSMUSP00000065861.6"/>
    <property type="gene ID" value="ENSMUSG00000055633.7"/>
</dbReference>
<dbReference type="GeneID" id="68992"/>
<dbReference type="KEGG" id="mmu:68992"/>
<dbReference type="UCSC" id="uc009ezp.2">
    <property type="organism name" value="mouse"/>
</dbReference>
<dbReference type="AGR" id="MGI:1916242"/>
<dbReference type="CTD" id="68992"/>
<dbReference type="MGI" id="MGI:1916242">
    <property type="gene designation" value="Zfp580"/>
</dbReference>
<dbReference type="VEuPathDB" id="HostDB:ENSMUSG00000055633"/>
<dbReference type="eggNOG" id="KOG1721">
    <property type="taxonomic scope" value="Eukaryota"/>
</dbReference>
<dbReference type="GeneTree" id="ENSGT00940000163086"/>
<dbReference type="HOGENOM" id="CLU_002678_42_5_1"/>
<dbReference type="InParanoid" id="Q9DB38"/>
<dbReference type="OMA" id="VWPRVGF"/>
<dbReference type="OrthoDB" id="3437960at2759"/>
<dbReference type="PhylomeDB" id="Q9DB38"/>
<dbReference type="TreeFam" id="TF338348"/>
<dbReference type="BioGRID-ORCS" id="68992">
    <property type="hits" value="1 hit in 77 CRISPR screens"/>
</dbReference>
<dbReference type="PRO" id="PR:Q9DB38"/>
<dbReference type="Proteomes" id="UP000000589">
    <property type="component" value="Chromosome 7"/>
</dbReference>
<dbReference type="RNAct" id="Q9DB38">
    <property type="molecule type" value="protein"/>
</dbReference>
<dbReference type="Bgee" id="ENSMUSG00000055633">
    <property type="expression patterns" value="Expressed in embryonic brain and 108 other cell types or tissues"/>
</dbReference>
<dbReference type="ExpressionAtlas" id="Q9DB38">
    <property type="expression patterns" value="baseline and differential"/>
</dbReference>
<dbReference type="GO" id="GO:0005634">
    <property type="term" value="C:nucleus"/>
    <property type="evidence" value="ECO:0000250"/>
    <property type="project" value="UniProtKB"/>
</dbReference>
<dbReference type="GO" id="GO:0003677">
    <property type="term" value="F:DNA binding"/>
    <property type="evidence" value="ECO:0007669"/>
    <property type="project" value="UniProtKB-KW"/>
</dbReference>
<dbReference type="GO" id="GO:0008270">
    <property type="term" value="F:zinc ion binding"/>
    <property type="evidence" value="ECO:0007669"/>
    <property type="project" value="UniProtKB-KW"/>
</dbReference>
<dbReference type="GO" id="GO:0070301">
    <property type="term" value="P:cellular response to hydrogen peroxide"/>
    <property type="evidence" value="ECO:0000250"/>
    <property type="project" value="UniProtKB"/>
</dbReference>
<dbReference type="GO" id="GO:0006935">
    <property type="term" value="P:chemotaxis"/>
    <property type="evidence" value="ECO:0007669"/>
    <property type="project" value="UniProtKB-KW"/>
</dbReference>
<dbReference type="GO" id="GO:0006954">
    <property type="term" value="P:inflammatory response"/>
    <property type="evidence" value="ECO:0007669"/>
    <property type="project" value="UniProtKB-KW"/>
</dbReference>
<dbReference type="GO" id="GO:0010595">
    <property type="term" value="P:positive regulation of endothelial cell migration"/>
    <property type="evidence" value="ECO:0000250"/>
    <property type="project" value="UniProtKB"/>
</dbReference>
<dbReference type="GO" id="GO:0001938">
    <property type="term" value="P:positive regulation of endothelial cell proliferation"/>
    <property type="evidence" value="ECO:0000250"/>
    <property type="project" value="UniProtKB"/>
</dbReference>
<dbReference type="GO" id="GO:0010628">
    <property type="term" value="P:positive regulation of gene expression"/>
    <property type="evidence" value="ECO:0000250"/>
    <property type="project" value="UniProtKB"/>
</dbReference>
<dbReference type="GO" id="GO:0032757">
    <property type="term" value="P:positive regulation of interleukin-8 production"/>
    <property type="evidence" value="ECO:0000250"/>
    <property type="project" value="UniProtKB"/>
</dbReference>
<dbReference type="GO" id="GO:0002690">
    <property type="term" value="P:positive regulation of leukocyte chemotaxis"/>
    <property type="evidence" value="ECO:0000250"/>
    <property type="project" value="UniProtKB"/>
</dbReference>
<dbReference type="FunFam" id="3.30.160.60:FF:000340">
    <property type="entry name" value="zinc finger protein 473 isoform X1"/>
    <property type="match status" value="1"/>
</dbReference>
<dbReference type="FunFam" id="3.30.160.60:FF:001357">
    <property type="entry name" value="Zinc finger protein 580"/>
    <property type="match status" value="1"/>
</dbReference>
<dbReference type="Gene3D" id="3.30.160.60">
    <property type="entry name" value="Classic Zinc Finger"/>
    <property type="match status" value="2"/>
</dbReference>
<dbReference type="InterPro" id="IPR036236">
    <property type="entry name" value="Znf_C2H2_sf"/>
</dbReference>
<dbReference type="InterPro" id="IPR013087">
    <property type="entry name" value="Znf_C2H2_type"/>
</dbReference>
<dbReference type="PANTHER" id="PTHR23235">
    <property type="entry name" value="KRUEPPEL-LIKE TRANSCRIPTION FACTOR"/>
    <property type="match status" value="1"/>
</dbReference>
<dbReference type="PANTHER" id="PTHR23235:SF120">
    <property type="entry name" value="KRUPPEL-LIKE FACTOR 15"/>
    <property type="match status" value="1"/>
</dbReference>
<dbReference type="Pfam" id="PF00096">
    <property type="entry name" value="zf-C2H2"/>
    <property type="match status" value="2"/>
</dbReference>
<dbReference type="SMART" id="SM00355">
    <property type="entry name" value="ZnF_C2H2"/>
    <property type="match status" value="3"/>
</dbReference>
<dbReference type="SUPFAM" id="SSF57667">
    <property type="entry name" value="beta-beta-alpha zinc fingers"/>
    <property type="match status" value="2"/>
</dbReference>
<dbReference type="PROSITE" id="PS00028">
    <property type="entry name" value="ZINC_FINGER_C2H2_1"/>
    <property type="match status" value="3"/>
</dbReference>
<dbReference type="PROSITE" id="PS50157">
    <property type="entry name" value="ZINC_FINGER_C2H2_2"/>
    <property type="match status" value="3"/>
</dbReference>
<comment type="function">
    <text evidence="1">Involved in the regulation of endothelial cell proliferation and migration. Mediates H(2)O(2)-induced leukocyte chemotaxis by elevating interleukin-8 production and may play a role in inflammation. May be involved in transcriptional regulation (By similarity).</text>
</comment>
<comment type="subunit">
    <text evidence="1">Interacts with SMAD2.</text>
</comment>
<comment type="subcellular location">
    <subcellularLocation>
        <location evidence="1">Nucleus</location>
    </subcellularLocation>
    <text evidence="1">Colocalized with SMAD2 in the nucleus.</text>
</comment>
<protein>
    <recommendedName>
        <fullName>Zinc finger protein 580</fullName>
    </recommendedName>
</protein>
<name>ZN580_MOUSE</name>
<proteinExistence type="evidence at transcript level"/>